<feature type="chain" id="PRO_0000331520" description="Proline-rich protein 33">
    <location>
        <begin position="1"/>
        <end position="260"/>
    </location>
</feature>
<feature type="region of interest" description="Disordered" evidence="1">
    <location>
        <begin position="29"/>
        <end position="132"/>
    </location>
</feature>
<feature type="compositionally biased region" description="Pro residues" evidence="1">
    <location>
        <begin position="73"/>
        <end position="83"/>
    </location>
</feature>
<accession>Q8C494</accession>
<proteinExistence type="evidence at transcript level"/>
<sequence length="260" mass="28520">MALDGDKSLCTSSTQPLIPVAHIRPLPAGVQTVSPRPEEPSITRPPPSFQASVNRESGARVVVPIAPTYRSPGPSPYSPPPAAPEAKHVEEPPTARPAMEPRNVSSLPGASGPSDLHPYPVPKVAPKPSRSGWTRLKKQLMEEAKEPAFPELKPNLEPMQPEVPAPVVGLQPPASRASRMWDAVLYRMSLAESHRDHPVGPGDRGHPLACLNRLPFLCRPRFNARKLQEVVRPPPTFHPILELHSRPKNFNRTAEGWRLQ</sequence>
<organism>
    <name type="scientific">Mus musculus</name>
    <name type="common">Mouse</name>
    <dbReference type="NCBI Taxonomy" id="10090"/>
    <lineage>
        <taxon>Eukaryota</taxon>
        <taxon>Metazoa</taxon>
        <taxon>Chordata</taxon>
        <taxon>Craniata</taxon>
        <taxon>Vertebrata</taxon>
        <taxon>Euteleostomi</taxon>
        <taxon>Mammalia</taxon>
        <taxon>Eutheria</taxon>
        <taxon>Euarchontoglires</taxon>
        <taxon>Glires</taxon>
        <taxon>Rodentia</taxon>
        <taxon>Myomorpha</taxon>
        <taxon>Muroidea</taxon>
        <taxon>Muridae</taxon>
        <taxon>Murinae</taxon>
        <taxon>Mus</taxon>
        <taxon>Mus</taxon>
    </lineage>
</organism>
<reference key="1">
    <citation type="journal article" date="2005" name="Science">
        <title>The transcriptional landscape of the mammalian genome.</title>
        <authorList>
            <person name="Carninci P."/>
            <person name="Kasukawa T."/>
            <person name="Katayama S."/>
            <person name="Gough J."/>
            <person name="Frith M.C."/>
            <person name="Maeda N."/>
            <person name="Oyama R."/>
            <person name="Ravasi T."/>
            <person name="Lenhard B."/>
            <person name="Wells C."/>
            <person name="Kodzius R."/>
            <person name="Shimokawa K."/>
            <person name="Bajic V.B."/>
            <person name="Brenner S.E."/>
            <person name="Batalov S."/>
            <person name="Forrest A.R."/>
            <person name="Zavolan M."/>
            <person name="Davis M.J."/>
            <person name="Wilming L.G."/>
            <person name="Aidinis V."/>
            <person name="Allen J.E."/>
            <person name="Ambesi-Impiombato A."/>
            <person name="Apweiler R."/>
            <person name="Aturaliya R.N."/>
            <person name="Bailey T.L."/>
            <person name="Bansal M."/>
            <person name="Baxter L."/>
            <person name="Beisel K.W."/>
            <person name="Bersano T."/>
            <person name="Bono H."/>
            <person name="Chalk A.M."/>
            <person name="Chiu K.P."/>
            <person name="Choudhary V."/>
            <person name="Christoffels A."/>
            <person name="Clutterbuck D.R."/>
            <person name="Crowe M.L."/>
            <person name="Dalla E."/>
            <person name="Dalrymple B.P."/>
            <person name="de Bono B."/>
            <person name="Della Gatta G."/>
            <person name="di Bernardo D."/>
            <person name="Down T."/>
            <person name="Engstrom P."/>
            <person name="Fagiolini M."/>
            <person name="Faulkner G."/>
            <person name="Fletcher C.F."/>
            <person name="Fukushima T."/>
            <person name="Furuno M."/>
            <person name="Futaki S."/>
            <person name="Gariboldi M."/>
            <person name="Georgii-Hemming P."/>
            <person name="Gingeras T.R."/>
            <person name="Gojobori T."/>
            <person name="Green R.E."/>
            <person name="Gustincich S."/>
            <person name="Harbers M."/>
            <person name="Hayashi Y."/>
            <person name="Hensch T.K."/>
            <person name="Hirokawa N."/>
            <person name="Hill D."/>
            <person name="Huminiecki L."/>
            <person name="Iacono M."/>
            <person name="Ikeo K."/>
            <person name="Iwama A."/>
            <person name="Ishikawa T."/>
            <person name="Jakt M."/>
            <person name="Kanapin A."/>
            <person name="Katoh M."/>
            <person name="Kawasawa Y."/>
            <person name="Kelso J."/>
            <person name="Kitamura H."/>
            <person name="Kitano H."/>
            <person name="Kollias G."/>
            <person name="Krishnan S.P."/>
            <person name="Kruger A."/>
            <person name="Kummerfeld S.K."/>
            <person name="Kurochkin I.V."/>
            <person name="Lareau L.F."/>
            <person name="Lazarevic D."/>
            <person name="Lipovich L."/>
            <person name="Liu J."/>
            <person name="Liuni S."/>
            <person name="McWilliam S."/>
            <person name="Madan Babu M."/>
            <person name="Madera M."/>
            <person name="Marchionni L."/>
            <person name="Matsuda H."/>
            <person name="Matsuzawa S."/>
            <person name="Miki H."/>
            <person name="Mignone F."/>
            <person name="Miyake S."/>
            <person name="Morris K."/>
            <person name="Mottagui-Tabar S."/>
            <person name="Mulder N."/>
            <person name="Nakano N."/>
            <person name="Nakauchi H."/>
            <person name="Ng P."/>
            <person name="Nilsson R."/>
            <person name="Nishiguchi S."/>
            <person name="Nishikawa S."/>
            <person name="Nori F."/>
            <person name="Ohara O."/>
            <person name="Okazaki Y."/>
            <person name="Orlando V."/>
            <person name="Pang K.C."/>
            <person name="Pavan W.J."/>
            <person name="Pavesi G."/>
            <person name="Pesole G."/>
            <person name="Petrovsky N."/>
            <person name="Piazza S."/>
            <person name="Reed J."/>
            <person name="Reid J.F."/>
            <person name="Ring B.Z."/>
            <person name="Ringwald M."/>
            <person name="Rost B."/>
            <person name="Ruan Y."/>
            <person name="Salzberg S.L."/>
            <person name="Sandelin A."/>
            <person name="Schneider C."/>
            <person name="Schoenbach C."/>
            <person name="Sekiguchi K."/>
            <person name="Semple C.A."/>
            <person name="Seno S."/>
            <person name="Sessa L."/>
            <person name="Sheng Y."/>
            <person name="Shibata Y."/>
            <person name="Shimada H."/>
            <person name="Shimada K."/>
            <person name="Silva D."/>
            <person name="Sinclair B."/>
            <person name="Sperling S."/>
            <person name="Stupka E."/>
            <person name="Sugiura K."/>
            <person name="Sultana R."/>
            <person name="Takenaka Y."/>
            <person name="Taki K."/>
            <person name="Tammoja K."/>
            <person name="Tan S.L."/>
            <person name="Tang S."/>
            <person name="Taylor M.S."/>
            <person name="Tegner J."/>
            <person name="Teichmann S.A."/>
            <person name="Ueda H.R."/>
            <person name="van Nimwegen E."/>
            <person name="Verardo R."/>
            <person name="Wei C.L."/>
            <person name="Yagi K."/>
            <person name="Yamanishi H."/>
            <person name="Zabarovsky E."/>
            <person name="Zhu S."/>
            <person name="Zimmer A."/>
            <person name="Hide W."/>
            <person name="Bult C."/>
            <person name="Grimmond S.M."/>
            <person name="Teasdale R.D."/>
            <person name="Liu E.T."/>
            <person name="Brusic V."/>
            <person name="Quackenbush J."/>
            <person name="Wahlestedt C."/>
            <person name="Mattick J.S."/>
            <person name="Hume D.A."/>
            <person name="Kai C."/>
            <person name="Sasaki D."/>
            <person name="Tomaru Y."/>
            <person name="Fukuda S."/>
            <person name="Kanamori-Katayama M."/>
            <person name="Suzuki M."/>
            <person name="Aoki J."/>
            <person name="Arakawa T."/>
            <person name="Iida J."/>
            <person name="Imamura K."/>
            <person name="Itoh M."/>
            <person name="Kato T."/>
            <person name="Kawaji H."/>
            <person name="Kawagashira N."/>
            <person name="Kawashima T."/>
            <person name="Kojima M."/>
            <person name="Kondo S."/>
            <person name="Konno H."/>
            <person name="Nakano K."/>
            <person name="Ninomiya N."/>
            <person name="Nishio T."/>
            <person name="Okada M."/>
            <person name="Plessy C."/>
            <person name="Shibata K."/>
            <person name="Shiraki T."/>
            <person name="Suzuki S."/>
            <person name="Tagami M."/>
            <person name="Waki K."/>
            <person name="Watahiki A."/>
            <person name="Okamura-Oho Y."/>
            <person name="Suzuki H."/>
            <person name="Kawai J."/>
            <person name="Hayashizaki Y."/>
        </authorList>
    </citation>
    <scope>NUCLEOTIDE SEQUENCE [LARGE SCALE MRNA]</scope>
    <source>
        <strain>C57BL/6J</strain>
        <tissue>Cerebellum</tissue>
    </source>
</reference>
<keyword id="KW-1185">Reference proteome</keyword>
<gene>
    <name type="primary">Prr33</name>
    <name type="synonym">Gm14492</name>
</gene>
<protein>
    <recommendedName>
        <fullName>Proline-rich protein 33</fullName>
    </recommendedName>
</protein>
<name>PRR33_MOUSE</name>
<dbReference type="EMBL" id="AK082720">
    <property type="protein sequence ID" value="BAC38585.1"/>
    <property type="molecule type" value="mRNA"/>
</dbReference>
<dbReference type="EMBL" id="AL603651">
    <property type="status" value="NOT_ANNOTATED_CDS"/>
    <property type="molecule type" value="Genomic_DNA"/>
</dbReference>
<dbReference type="STRING" id="10090.ENSMUSP00000158581"/>
<dbReference type="iPTMnet" id="Q8C494"/>
<dbReference type="PhosphoSitePlus" id="Q8C494"/>
<dbReference type="jPOST" id="Q8C494"/>
<dbReference type="PaxDb" id="10090-ENSMUSP00000061994"/>
<dbReference type="ProteomicsDB" id="291747"/>
<dbReference type="UCSC" id="uc009kni.1">
    <property type="organism name" value="mouse"/>
</dbReference>
<dbReference type="AGR" id="MGI:3642289"/>
<dbReference type="MGI" id="MGI:3642289">
    <property type="gene designation" value="Prr33"/>
</dbReference>
<dbReference type="eggNOG" id="ENOG502QPMN">
    <property type="taxonomic scope" value="Eukaryota"/>
</dbReference>
<dbReference type="HOGENOM" id="CLU_1055730_0_0_1"/>
<dbReference type="InParanoid" id="Q8C494"/>
<dbReference type="TreeFam" id="TF337361"/>
<dbReference type="PRO" id="PR:Q8C494"/>
<dbReference type="Proteomes" id="UP000000589">
    <property type="component" value="Unplaced"/>
</dbReference>
<dbReference type="RNAct" id="Q8C494">
    <property type="molecule type" value="protein"/>
</dbReference>
<dbReference type="GO" id="GO:0009611">
    <property type="term" value="P:response to wounding"/>
    <property type="evidence" value="ECO:0000270"/>
    <property type="project" value="MGI"/>
</dbReference>
<dbReference type="InterPro" id="IPR028004">
    <property type="entry name" value="DUF4643"/>
</dbReference>
<dbReference type="PANTHER" id="PTHR38004">
    <property type="entry name" value="PROLINE-RICH PROTEIN 33"/>
    <property type="match status" value="1"/>
</dbReference>
<dbReference type="PANTHER" id="PTHR38004:SF1">
    <property type="entry name" value="PROLINE-RICH PROTEIN 33"/>
    <property type="match status" value="1"/>
</dbReference>
<dbReference type="Pfam" id="PF15485">
    <property type="entry name" value="DUF4643"/>
    <property type="match status" value="1"/>
</dbReference>
<evidence type="ECO:0000256" key="1">
    <source>
        <dbReference type="SAM" id="MobiDB-lite"/>
    </source>
</evidence>